<organism>
    <name type="scientific">Bacillus subtilis (strain 168)</name>
    <dbReference type="NCBI Taxonomy" id="224308"/>
    <lineage>
        <taxon>Bacteria</taxon>
        <taxon>Bacillati</taxon>
        <taxon>Bacillota</taxon>
        <taxon>Bacilli</taxon>
        <taxon>Bacillales</taxon>
        <taxon>Bacillaceae</taxon>
        <taxon>Bacillus</taxon>
    </lineage>
</organism>
<evidence type="ECO:0000255" key="1">
    <source>
        <dbReference type="HAMAP-Rule" id="MF_00161"/>
    </source>
</evidence>
<evidence type="ECO:0000305" key="2"/>
<evidence type="ECO:0000305" key="3">
    <source>
    </source>
</evidence>
<keyword id="KW-0064">Aspartyl protease</keyword>
<keyword id="KW-1003">Cell membrane</keyword>
<keyword id="KW-0378">Hydrolase</keyword>
<keyword id="KW-0472">Membrane</keyword>
<keyword id="KW-0645">Protease</keyword>
<keyword id="KW-1185">Reference proteome</keyword>
<keyword id="KW-0812">Transmembrane</keyword>
<keyword id="KW-1133">Transmembrane helix</keyword>
<dbReference type="EC" id="3.4.23.36" evidence="1"/>
<dbReference type="EMBL" id="U48870">
    <property type="protein sequence ID" value="AAB57766.1"/>
    <property type="molecule type" value="Genomic_DNA"/>
</dbReference>
<dbReference type="EMBL" id="AL009126">
    <property type="protein sequence ID" value="CAB13419.1"/>
    <property type="molecule type" value="Genomic_DNA"/>
</dbReference>
<dbReference type="EMBL" id="U08116">
    <property type="status" value="NOT_ANNOTATED_CDS"/>
    <property type="molecule type" value="Unassigned_DNA"/>
</dbReference>
<dbReference type="PIR" id="G69653">
    <property type="entry name" value="G69653"/>
</dbReference>
<dbReference type="RefSeq" id="NP_389428.1">
    <property type="nucleotide sequence ID" value="NC_000964.3"/>
</dbReference>
<dbReference type="RefSeq" id="WP_003245047.1">
    <property type="nucleotide sequence ID" value="NZ_OZ025638.1"/>
</dbReference>
<dbReference type="SMR" id="Q45479"/>
<dbReference type="FunCoup" id="Q45479">
    <property type="interactions" value="548"/>
</dbReference>
<dbReference type="STRING" id="224308.BSU15450"/>
<dbReference type="PaxDb" id="224308-BSU15450"/>
<dbReference type="EnsemblBacteria" id="CAB13419">
    <property type="protein sequence ID" value="CAB13419"/>
    <property type="gene ID" value="BSU_15450"/>
</dbReference>
<dbReference type="GeneID" id="938172"/>
<dbReference type="KEGG" id="bsu:BSU15450"/>
<dbReference type="PATRIC" id="fig|224308.179.peg.1684"/>
<dbReference type="eggNOG" id="COG0597">
    <property type="taxonomic scope" value="Bacteria"/>
</dbReference>
<dbReference type="InParanoid" id="Q45479"/>
<dbReference type="OrthoDB" id="9810259at2"/>
<dbReference type="PhylomeDB" id="Q45479"/>
<dbReference type="BioCyc" id="BSUB:BSU15450-MONOMER"/>
<dbReference type="UniPathway" id="UPA00665"/>
<dbReference type="Proteomes" id="UP000001570">
    <property type="component" value="Chromosome"/>
</dbReference>
<dbReference type="GO" id="GO:0005886">
    <property type="term" value="C:plasma membrane"/>
    <property type="evidence" value="ECO:0000318"/>
    <property type="project" value="GO_Central"/>
</dbReference>
<dbReference type="GO" id="GO:0004190">
    <property type="term" value="F:aspartic-type endopeptidase activity"/>
    <property type="evidence" value="ECO:0007669"/>
    <property type="project" value="UniProtKB-UniRule"/>
</dbReference>
<dbReference type="GO" id="GO:0004175">
    <property type="term" value="F:endopeptidase activity"/>
    <property type="evidence" value="ECO:0000318"/>
    <property type="project" value="GO_Central"/>
</dbReference>
<dbReference type="GO" id="GO:0006508">
    <property type="term" value="P:proteolysis"/>
    <property type="evidence" value="ECO:0007669"/>
    <property type="project" value="UniProtKB-KW"/>
</dbReference>
<dbReference type="HAMAP" id="MF_00161">
    <property type="entry name" value="LspA"/>
    <property type="match status" value="1"/>
</dbReference>
<dbReference type="InterPro" id="IPR001872">
    <property type="entry name" value="Peptidase_A8"/>
</dbReference>
<dbReference type="NCBIfam" id="TIGR00077">
    <property type="entry name" value="lspA"/>
    <property type="match status" value="1"/>
</dbReference>
<dbReference type="PANTHER" id="PTHR33695">
    <property type="entry name" value="LIPOPROTEIN SIGNAL PEPTIDASE"/>
    <property type="match status" value="1"/>
</dbReference>
<dbReference type="PANTHER" id="PTHR33695:SF1">
    <property type="entry name" value="LIPOPROTEIN SIGNAL PEPTIDASE"/>
    <property type="match status" value="1"/>
</dbReference>
<dbReference type="Pfam" id="PF01252">
    <property type="entry name" value="Peptidase_A8"/>
    <property type="match status" value="1"/>
</dbReference>
<dbReference type="PRINTS" id="PR00781">
    <property type="entry name" value="LIPOSIGPTASE"/>
</dbReference>
<dbReference type="PROSITE" id="PS00855">
    <property type="entry name" value="SPASE_II"/>
    <property type="match status" value="1"/>
</dbReference>
<comment type="function">
    <text evidence="1">This protein specifically catalyzes the removal of signal peptides from prolipoproteins.</text>
</comment>
<comment type="catalytic activity">
    <reaction evidence="1">
        <text>Release of signal peptides from bacterial membrane prolipoproteins. Hydrolyzes -Xaa-Yaa-Zaa-|-(S,diacylglyceryl)Cys-, in which Xaa is hydrophobic (preferably Leu), and Yaa (Ala or Ser) and Zaa (Gly or Ala) have small, neutral side chains.</text>
        <dbReference type="EC" id="3.4.23.36"/>
    </reaction>
</comment>
<comment type="pathway">
    <text evidence="1">Protein modification; lipoprotein biosynthesis (signal peptide cleavage).</text>
</comment>
<comment type="subcellular location">
    <subcellularLocation>
        <location evidence="1">Cell membrane</location>
        <topology evidence="1">Multi-pass membrane protein</topology>
    </subcellularLocation>
</comment>
<comment type="similarity">
    <text evidence="1 2">Belongs to the peptidase A8 family.</text>
</comment>
<reference key="1">
    <citation type="journal article" date="1997" name="Microbiology">
        <title>The signal peptidase II (lsp) gene of Bacillus subtilis.</title>
        <authorList>
            <person name="Pragai Z."/>
            <person name="Tjalsma H."/>
            <person name="Bolhuis A."/>
            <person name="van Dijl J.M."/>
            <person name="Venema G."/>
            <person name="Bron S."/>
        </authorList>
    </citation>
    <scope>NUCLEOTIDE SEQUENCE [GENOMIC DNA]</scope>
    <source>
        <strain>168</strain>
    </source>
</reference>
<reference key="2">
    <citation type="journal article" date="1997" name="Nature">
        <title>The complete genome sequence of the Gram-positive bacterium Bacillus subtilis.</title>
        <authorList>
            <person name="Kunst F."/>
            <person name="Ogasawara N."/>
            <person name="Moszer I."/>
            <person name="Albertini A.M."/>
            <person name="Alloni G."/>
            <person name="Azevedo V."/>
            <person name="Bertero M.G."/>
            <person name="Bessieres P."/>
            <person name="Bolotin A."/>
            <person name="Borchert S."/>
            <person name="Borriss R."/>
            <person name="Boursier L."/>
            <person name="Brans A."/>
            <person name="Braun M."/>
            <person name="Brignell S.C."/>
            <person name="Bron S."/>
            <person name="Brouillet S."/>
            <person name="Bruschi C.V."/>
            <person name="Caldwell B."/>
            <person name="Capuano V."/>
            <person name="Carter N.M."/>
            <person name="Choi S.-K."/>
            <person name="Codani J.-J."/>
            <person name="Connerton I.F."/>
            <person name="Cummings N.J."/>
            <person name="Daniel R.A."/>
            <person name="Denizot F."/>
            <person name="Devine K.M."/>
            <person name="Duesterhoeft A."/>
            <person name="Ehrlich S.D."/>
            <person name="Emmerson P.T."/>
            <person name="Entian K.-D."/>
            <person name="Errington J."/>
            <person name="Fabret C."/>
            <person name="Ferrari E."/>
            <person name="Foulger D."/>
            <person name="Fritz C."/>
            <person name="Fujita M."/>
            <person name="Fujita Y."/>
            <person name="Fuma S."/>
            <person name="Galizzi A."/>
            <person name="Galleron N."/>
            <person name="Ghim S.-Y."/>
            <person name="Glaser P."/>
            <person name="Goffeau A."/>
            <person name="Golightly E.J."/>
            <person name="Grandi G."/>
            <person name="Guiseppi G."/>
            <person name="Guy B.J."/>
            <person name="Haga K."/>
            <person name="Haiech J."/>
            <person name="Harwood C.R."/>
            <person name="Henaut A."/>
            <person name="Hilbert H."/>
            <person name="Holsappel S."/>
            <person name="Hosono S."/>
            <person name="Hullo M.-F."/>
            <person name="Itaya M."/>
            <person name="Jones L.-M."/>
            <person name="Joris B."/>
            <person name="Karamata D."/>
            <person name="Kasahara Y."/>
            <person name="Klaerr-Blanchard M."/>
            <person name="Klein C."/>
            <person name="Kobayashi Y."/>
            <person name="Koetter P."/>
            <person name="Koningstein G."/>
            <person name="Krogh S."/>
            <person name="Kumano M."/>
            <person name="Kurita K."/>
            <person name="Lapidus A."/>
            <person name="Lardinois S."/>
            <person name="Lauber J."/>
            <person name="Lazarevic V."/>
            <person name="Lee S.-M."/>
            <person name="Levine A."/>
            <person name="Liu H."/>
            <person name="Masuda S."/>
            <person name="Mauel C."/>
            <person name="Medigue C."/>
            <person name="Medina N."/>
            <person name="Mellado R.P."/>
            <person name="Mizuno M."/>
            <person name="Moestl D."/>
            <person name="Nakai S."/>
            <person name="Noback M."/>
            <person name="Noone D."/>
            <person name="O'Reilly M."/>
            <person name="Ogawa K."/>
            <person name="Ogiwara A."/>
            <person name="Oudega B."/>
            <person name="Park S.-H."/>
            <person name="Parro V."/>
            <person name="Pohl T.M."/>
            <person name="Portetelle D."/>
            <person name="Porwollik S."/>
            <person name="Prescott A.M."/>
            <person name="Presecan E."/>
            <person name="Pujic P."/>
            <person name="Purnelle B."/>
            <person name="Rapoport G."/>
            <person name="Rey M."/>
            <person name="Reynolds S."/>
            <person name="Rieger M."/>
            <person name="Rivolta C."/>
            <person name="Rocha E."/>
            <person name="Roche B."/>
            <person name="Rose M."/>
            <person name="Sadaie Y."/>
            <person name="Sato T."/>
            <person name="Scanlan E."/>
            <person name="Schleich S."/>
            <person name="Schroeter R."/>
            <person name="Scoffone F."/>
            <person name="Sekiguchi J."/>
            <person name="Sekowska A."/>
            <person name="Seror S.J."/>
            <person name="Serror P."/>
            <person name="Shin B.-S."/>
            <person name="Soldo B."/>
            <person name="Sorokin A."/>
            <person name="Tacconi E."/>
            <person name="Takagi T."/>
            <person name="Takahashi H."/>
            <person name="Takemaru K."/>
            <person name="Takeuchi M."/>
            <person name="Tamakoshi A."/>
            <person name="Tanaka T."/>
            <person name="Terpstra P."/>
            <person name="Tognoni A."/>
            <person name="Tosato V."/>
            <person name="Uchiyama S."/>
            <person name="Vandenbol M."/>
            <person name="Vannier F."/>
            <person name="Vassarotti A."/>
            <person name="Viari A."/>
            <person name="Wambutt R."/>
            <person name="Wedler E."/>
            <person name="Wedler H."/>
            <person name="Weitzenegger T."/>
            <person name="Winters P."/>
            <person name="Wipat A."/>
            <person name="Yamamoto H."/>
            <person name="Yamane K."/>
            <person name="Yasumoto K."/>
            <person name="Yata K."/>
            <person name="Yoshida K."/>
            <person name="Yoshikawa H.-F."/>
            <person name="Zumstein E."/>
            <person name="Yoshikawa H."/>
            <person name="Danchin A."/>
        </authorList>
    </citation>
    <scope>NUCLEOTIDE SEQUENCE [LARGE SCALE GENOMIC DNA]</scope>
    <source>
        <strain>168</strain>
    </source>
</reference>
<reference key="3">
    <citation type="submission" date="1994-03" db="EMBL/GenBank/DDBJ databases">
        <authorList>
            <person name="Baek-Rak L."/>
            <person name="Jeong-Hyun K."/>
        </authorList>
    </citation>
    <scope>NUCLEOTIDE SEQUENCE [GENOMIC DNA] OF 1-33</scope>
</reference>
<reference key="4">
    <citation type="journal article" date="1999" name="J. Biol. Chem.">
        <title>The potential active site of the lipoprotein-specific (type II) signal peptidase of Bacillus subtilis.</title>
        <authorList>
            <person name="Tjalsma H."/>
            <person name="Zanen G."/>
            <person name="Venema G."/>
            <person name="Bron S."/>
            <person name="van Dijl J.M."/>
        </authorList>
    </citation>
    <scope>MUTAGENESIS</scope>
    <scope>POTENTIAL ACTIVE SITES</scope>
</reference>
<name>LSPA_BACSU</name>
<accession>Q45479</accession>
<proteinExistence type="inferred from homology"/>
<sequence>MLYYMIALLIIAADQLTKWLVVKNMELGQSIPIIDQVFYITSHRNTGAAWGILAGQMWFFYLITTAVIIGIVYYIQRYTKGQRLLGVALGLMLGGAIGNFIDRAVRQEVVDFIHVIIVNYNYPIFNIADSSLCVGVMLLFIQMLLDSGKKKKEQ</sequence>
<gene>
    <name evidence="1" type="primary">lspA</name>
    <name type="synonym">lsp</name>
    <name type="ordered locus">BSU15450</name>
</gene>
<protein>
    <recommendedName>
        <fullName evidence="1">Lipoprotein signal peptidase</fullName>
        <ecNumber evidence="1">3.4.23.36</ecNumber>
    </recommendedName>
    <alternativeName>
        <fullName evidence="1">Prolipoprotein signal peptidase</fullName>
    </alternativeName>
    <alternativeName>
        <fullName evidence="1">Signal peptidase II</fullName>
        <shortName evidence="1">SPase II</shortName>
    </alternativeName>
</protein>
<feature type="chain" id="PRO_0000178769" description="Lipoprotein signal peptidase">
    <location>
        <begin position="1"/>
        <end position="154"/>
    </location>
</feature>
<feature type="transmembrane region" description="Helical" evidence="1">
    <location>
        <begin position="52"/>
        <end position="72"/>
    </location>
</feature>
<feature type="transmembrane region" description="Helical" evidence="1">
    <location>
        <begin position="85"/>
        <end position="105"/>
    </location>
</feature>
<feature type="transmembrane region" description="Helical" evidence="1">
    <location>
        <begin position="124"/>
        <end position="144"/>
    </location>
</feature>
<feature type="active site" evidence="1">
    <location>
        <position position="111"/>
    </location>
</feature>
<feature type="active site" evidence="1 3">
    <location>
        <position position="129"/>
    </location>
</feature>